<proteinExistence type="inferred from homology"/>
<gene>
    <name evidence="1" type="primary">rplF</name>
    <name type="ordered locus">Tpet_1307</name>
</gene>
<accession>A5IM98</accession>
<dbReference type="EMBL" id="CP000702">
    <property type="protein sequence ID" value="ABQ47321.1"/>
    <property type="molecule type" value="Genomic_DNA"/>
</dbReference>
<dbReference type="RefSeq" id="WP_011943793.1">
    <property type="nucleotide sequence ID" value="NC_009486.1"/>
</dbReference>
<dbReference type="SMR" id="A5IM98"/>
<dbReference type="STRING" id="390874.Tpet_1307"/>
<dbReference type="KEGG" id="tpt:Tpet_1307"/>
<dbReference type="eggNOG" id="COG0097">
    <property type="taxonomic scope" value="Bacteria"/>
</dbReference>
<dbReference type="HOGENOM" id="CLU_065464_1_2_0"/>
<dbReference type="Proteomes" id="UP000006558">
    <property type="component" value="Chromosome"/>
</dbReference>
<dbReference type="GO" id="GO:0022625">
    <property type="term" value="C:cytosolic large ribosomal subunit"/>
    <property type="evidence" value="ECO:0007669"/>
    <property type="project" value="TreeGrafter"/>
</dbReference>
<dbReference type="GO" id="GO:0019843">
    <property type="term" value="F:rRNA binding"/>
    <property type="evidence" value="ECO:0007669"/>
    <property type="project" value="UniProtKB-UniRule"/>
</dbReference>
<dbReference type="GO" id="GO:0003735">
    <property type="term" value="F:structural constituent of ribosome"/>
    <property type="evidence" value="ECO:0007669"/>
    <property type="project" value="InterPro"/>
</dbReference>
<dbReference type="GO" id="GO:0002181">
    <property type="term" value="P:cytoplasmic translation"/>
    <property type="evidence" value="ECO:0007669"/>
    <property type="project" value="TreeGrafter"/>
</dbReference>
<dbReference type="FunFam" id="3.90.930.12:FF:000001">
    <property type="entry name" value="50S ribosomal protein L6"/>
    <property type="match status" value="1"/>
</dbReference>
<dbReference type="FunFam" id="3.90.930.12:FF:000002">
    <property type="entry name" value="50S ribosomal protein L6"/>
    <property type="match status" value="1"/>
</dbReference>
<dbReference type="Gene3D" id="3.90.930.12">
    <property type="entry name" value="Ribosomal protein L6, alpha-beta domain"/>
    <property type="match status" value="2"/>
</dbReference>
<dbReference type="HAMAP" id="MF_01365_B">
    <property type="entry name" value="Ribosomal_uL6_B"/>
    <property type="match status" value="1"/>
</dbReference>
<dbReference type="InterPro" id="IPR000702">
    <property type="entry name" value="Ribosomal_uL6-like"/>
</dbReference>
<dbReference type="InterPro" id="IPR036789">
    <property type="entry name" value="Ribosomal_uL6-like_a/b-dom_sf"/>
</dbReference>
<dbReference type="InterPro" id="IPR020040">
    <property type="entry name" value="Ribosomal_uL6_a/b-dom"/>
</dbReference>
<dbReference type="InterPro" id="IPR019906">
    <property type="entry name" value="Ribosomal_uL6_bac-type"/>
</dbReference>
<dbReference type="NCBIfam" id="TIGR03654">
    <property type="entry name" value="L6_bact"/>
    <property type="match status" value="1"/>
</dbReference>
<dbReference type="PANTHER" id="PTHR11655">
    <property type="entry name" value="60S/50S RIBOSOMAL PROTEIN L6/L9"/>
    <property type="match status" value="1"/>
</dbReference>
<dbReference type="PANTHER" id="PTHR11655:SF14">
    <property type="entry name" value="LARGE RIBOSOMAL SUBUNIT PROTEIN UL6M"/>
    <property type="match status" value="1"/>
</dbReference>
<dbReference type="Pfam" id="PF00347">
    <property type="entry name" value="Ribosomal_L6"/>
    <property type="match status" value="2"/>
</dbReference>
<dbReference type="PIRSF" id="PIRSF002162">
    <property type="entry name" value="Ribosomal_L6"/>
    <property type="match status" value="1"/>
</dbReference>
<dbReference type="PRINTS" id="PR00059">
    <property type="entry name" value="RIBOSOMALL6"/>
</dbReference>
<dbReference type="SUPFAM" id="SSF56053">
    <property type="entry name" value="Ribosomal protein L6"/>
    <property type="match status" value="2"/>
</dbReference>
<feature type="chain" id="PRO_1000055326" description="Large ribosomal subunit protein uL6">
    <location>
        <begin position="1"/>
        <end position="184"/>
    </location>
</feature>
<protein>
    <recommendedName>
        <fullName evidence="1">Large ribosomal subunit protein uL6</fullName>
    </recommendedName>
    <alternativeName>
        <fullName evidence="2">50S ribosomal protein L6</fullName>
    </alternativeName>
</protein>
<organism>
    <name type="scientific">Thermotoga petrophila (strain ATCC BAA-488 / DSM 13995 / JCM 10881 / RKU-1)</name>
    <dbReference type="NCBI Taxonomy" id="390874"/>
    <lineage>
        <taxon>Bacteria</taxon>
        <taxon>Thermotogati</taxon>
        <taxon>Thermotogota</taxon>
        <taxon>Thermotogae</taxon>
        <taxon>Thermotogales</taxon>
        <taxon>Thermotogaceae</taxon>
        <taxon>Thermotoga</taxon>
    </lineage>
</organism>
<comment type="function">
    <text evidence="1">This protein binds to the 23S rRNA, and is important in its secondary structure. It is located near the subunit interface in the base of the L7/L12 stalk, and near the tRNA binding site of the peptidyltransferase center.</text>
</comment>
<comment type="subunit">
    <text evidence="1">Part of the 50S ribosomal subunit.</text>
</comment>
<comment type="similarity">
    <text evidence="1">Belongs to the universal ribosomal protein uL6 family.</text>
</comment>
<reference key="1">
    <citation type="submission" date="2007-05" db="EMBL/GenBank/DDBJ databases">
        <title>Complete sequence of Thermotoga petrophila RKU-1.</title>
        <authorList>
            <consortium name="US DOE Joint Genome Institute"/>
            <person name="Copeland A."/>
            <person name="Lucas S."/>
            <person name="Lapidus A."/>
            <person name="Barry K."/>
            <person name="Glavina del Rio T."/>
            <person name="Dalin E."/>
            <person name="Tice H."/>
            <person name="Pitluck S."/>
            <person name="Sims D."/>
            <person name="Brettin T."/>
            <person name="Bruce D."/>
            <person name="Detter J.C."/>
            <person name="Han C."/>
            <person name="Tapia R."/>
            <person name="Schmutz J."/>
            <person name="Larimer F."/>
            <person name="Land M."/>
            <person name="Hauser L."/>
            <person name="Kyrpides N."/>
            <person name="Mikhailova N."/>
            <person name="Nelson K."/>
            <person name="Gogarten J.P."/>
            <person name="Noll K."/>
            <person name="Richardson P."/>
        </authorList>
    </citation>
    <scope>NUCLEOTIDE SEQUENCE [LARGE SCALE GENOMIC DNA]</scope>
    <source>
        <strain>ATCC BAA-488 / DSM 13995 / JCM 10881 / RKU-1</strain>
    </source>
</reference>
<sequence length="184" mass="20757">MSRLAKKPIVLPQGVTVEIKDNVVKVKGPKGELSQEFLPYVKIEVEGNEVWVRPNENQIIRKSDWRKIKMFQGTYWSLIRNMVVGVTEGYKKELEIVGIGYRAQLQGNTVVMNLGYAHPVVYEIPSDVKIEVPAPNRIVVSGIDKQRVGQVAAEIRAFRPPNVYTGKGIRYVGEVVRQKEGKKA</sequence>
<name>RL6_THEP1</name>
<keyword id="KW-0687">Ribonucleoprotein</keyword>
<keyword id="KW-0689">Ribosomal protein</keyword>
<keyword id="KW-0694">RNA-binding</keyword>
<keyword id="KW-0699">rRNA-binding</keyword>
<evidence type="ECO:0000255" key="1">
    <source>
        <dbReference type="HAMAP-Rule" id="MF_01365"/>
    </source>
</evidence>
<evidence type="ECO:0000305" key="2"/>